<keyword id="KW-0963">Cytoplasm</keyword>
<keyword id="KW-0238">DNA-binding</keyword>
<keyword id="KW-0240">DNA-directed RNA polymerase</keyword>
<keyword id="KW-0460">Magnesium</keyword>
<keyword id="KW-0479">Metal-binding</keyword>
<keyword id="KW-0548">Nucleotidyltransferase</keyword>
<keyword id="KW-1185">Reference proteome</keyword>
<keyword id="KW-0804">Transcription</keyword>
<keyword id="KW-0808">Transferase</keyword>
<keyword id="KW-0862">Zinc</keyword>
<comment type="function">
    <text evidence="1">DNA-dependent RNA polymerase (RNAP) catalyzes the transcription of DNA into RNA using the four ribonucleoside triphosphates as substrates. Forms the clamp head domain.</text>
</comment>
<comment type="catalytic activity">
    <reaction evidence="1">
        <text>RNA(n) + a ribonucleoside 5'-triphosphate = RNA(n+1) + diphosphate</text>
        <dbReference type="Rhea" id="RHEA:21248"/>
        <dbReference type="Rhea" id="RHEA-COMP:14527"/>
        <dbReference type="Rhea" id="RHEA-COMP:17342"/>
        <dbReference type="ChEBI" id="CHEBI:33019"/>
        <dbReference type="ChEBI" id="CHEBI:61557"/>
        <dbReference type="ChEBI" id="CHEBI:140395"/>
        <dbReference type="EC" id="2.7.7.6"/>
    </reaction>
</comment>
<comment type="cofactor">
    <cofactor evidence="1">
        <name>Mg(2+)</name>
        <dbReference type="ChEBI" id="CHEBI:18420"/>
    </cofactor>
</comment>
<comment type="cofactor">
    <cofactor evidence="1">
        <name>Zn(2+)</name>
        <dbReference type="ChEBI" id="CHEBI:29105"/>
    </cofactor>
    <text evidence="1">Binds at least 2 Zn(2+) per subunit.</text>
</comment>
<comment type="subunit">
    <text evidence="1">Part of the RNA polymerase complex.</text>
</comment>
<comment type="subcellular location">
    <subcellularLocation>
        <location evidence="1">Cytoplasm</location>
    </subcellularLocation>
</comment>
<comment type="similarity">
    <text evidence="1">Belongs to the RNA polymerase beta' chain family.</text>
</comment>
<sequence length="885" mass="100075">MMGISKRISSIKFALLSPDEIRKLSQVKVITADTYDDDGYPIEHGLMDLHMGVIEPGLRCATCGGKVDECPGHFGHIELAMPVVHVGFVKEIKMFLDATCRSCGRIKLTDDEIRTYLPEIQKMDFETGDPEDIEILTKKYVDLASQRMVCPHCGAQQSKIILDKPTTFREEGTNVKITPKEIRERLERIPDDDLIFFGFNPKTARPEWMVLTVLPVPPINVRPSITLETGERSEDDLTHKLVDIIRISQRLRESRDNGSPQLIIEDLWDLLQFHVTTYFDNQTPGIPPARHRSGRALKTLVQRLKGKEGRFRSNLSGKRVSFSSRTVISPEPYLSVNEVGVPERAARELTVPVIVNQFNIDEMRELIKRGRNPRDQFGRYVTGVNYVIRPDGRRIKITDQNAAENADRIDIGWTVERQLMEGDIVLFNRQPSLHRMSMMGHTVRILPGQTFRFNLAVCTPYNADFDGDEMNLHVIQKEEARAEARIIMKVQEQIMSPRFGGPIIGGIHDHVTALFLLTHNNPRYTHEEMVHIMAYLEPDLLPEARIENGEKYYYGRDIFSTILPKGLNVRFRSKLCSGSSERCEFEDDPSDTYVEIVDGKMIHGTIDEAAVSPFSGAIIDKIFRKFGSQEAARFIDRMTRLAVGFITYRGFSTGISDYDIPESAVARIEELVAQAEDRINKLIETFRRGELQPAPGRSVEDTLEMEILSEAGVVRDESGKIASSYLGLKVPSVIMARSGARATMLNISEVAGIVGQQSVRGGRLNRGYYNRTLPHFKRGDIGADARGFVRSSYMTGLSPTEYFFHSIGGREGLVDTAVRTSRSGYMQRRLINAFEDLKVDDSREVKDTVGSLIQIRYGEDGIDPTRSARGKAVDMNYILFDEERR</sequence>
<feature type="chain" id="PRO_0000074009" description="DNA-directed RNA polymerase subunit Rpo1N">
    <location>
        <begin position="1"/>
        <end position="885"/>
    </location>
</feature>
<feature type="binding site" evidence="1">
    <location>
        <position position="60"/>
    </location>
    <ligand>
        <name>Zn(2+)</name>
        <dbReference type="ChEBI" id="CHEBI:29105"/>
        <label>1</label>
    </ligand>
</feature>
<feature type="binding site" evidence="1">
    <location>
        <position position="63"/>
    </location>
    <ligand>
        <name>Zn(2+)</name>
        <dbReference type="ChEBI" id="CHEBI:29105"/>
        <label>1</label>
    </ligand>
</feature>
<feature type="binding site" evidence="1">
    <location>
        <position position="70"/>
    </location>
    <ligand>
        <name>Zn(2+)</name>
        <dbReference type="ChEBI" id="CHEBI:29105"/>
        <label>1</label>
    </ligand>
</feature>
<feature type="binding site" evidence="1">
    <location>
        <position position="73"/>
    </location>
    <ligand>
        <name>Zn(2+)</name>
        <dbReference type="ChEBI" id="CHEBI:29105"/>
        <label>1</label>
    </ligand>
</feature>
<feature type="binding site" evidence="1">
    <location>
        <position position="100"/>
    </location>
    <ligand>
        <name>Zn(2+)</name>
        <dbReference type="ChEBI" id="CHEBI:29105"/>
        <label>2</label>
    </ligand>
</feature>
<feature type="binding site" evidence="1">
    <location>
        <position position="103"/>
    </location>
    <ligand>
        <name>Zn(2+)</name>
        <dbReference type="ChEBI" id="CHEBI:29105"/>
        <label>2</label>
    </ligand>
</feature>
<feature type="binding site" evidence="1">
    <location>
        <position position="150"/>
    </location>
    <ligand>
        <name>Zn(2+)</name>
        <dbReference type="ChEBI" id="CHEBI:29105"/>
        <label>2</label>
    </ligand>
</feature>
<feature type="binding site" evidence="1">
    <location>
        <position position="153"/>
    </location>
    <ligand>
        <name>Zn(2+)</name>
        <dbReference type="ChEBI" id="CHEBI:29105"/>
        <label>2</label>
    </ligand>
</feature>
<feature type="binding site" evidence="1">
    <location>
        <position position="464"/>
    </location>
    <ligand>
        <name>Mg(2+)</name>
        <dbReference type="ChEBI" id="CHEBI:18420"/>
    </ligand>
</feature>
<feature type="binding site" evidence="1">
    <location>
        <position position="466"/>
    </location>
    <ligand>
        <name>Mg(2+)</name>
        <dbReference type="ChEBI" id="CHEBI:18420"/>
    </ligand>
</feature>
<feature type="binding site" evidence="1">
    <location>
        <position position="468"/>
    </location>
    <ligand>
        <name>Mg(2+)</name>
        <dbReference type="ChEBI" id="CHEBI:18420"/>
    </ligand>
</feature>
<evidence type="ECO:0000255" key="1">
    <source>
        <dbReference type="HAMAP-Rule" id="MF_00863"/>
    </source>
</evidence>
<reference key="1">
    <citation type="journal article" date="1992" name="Nucleic Acids Res.">
        <title>Nucleotide sequence of the genes encoding the subunits H, B, A' and A'' of the DNA-dependent RNA polymerase and the initiator tRNA from Thermoplasma acidophilum.</title>
        <authorList>
            <person name="Klenk H.-P."/>
            <person name="Renner O."/>
            <person name="Schwass V."/>
            <person name="Zillig W."/>
        </authorList>
    </citation>
    <scope>NUCLEOTIDE SEQUENCE [GENOMIC DNA]</scope>
    <source>
        <strain>ATCC 25905 / DSM 1728 / JCM 9062 / NBRC 15155 / AMRC-C165</strain>
    </source>
</reference>
<reference key="2">
    <citation type="journal article" date="2000" name="Nature">
        <title>The genome sequence of the thermoacidophilic scavenger Thermoplasma acidophilum.</title>
        <authorList>
            <person name="Ruepp A."/>
            <person name="Graml W."/>
            <person name="Santos-Martinez M.-L."/>
            <person name="Koretke K.K."/>
            <person name="Volker C."/>
            <person name="Mewes H.-W."/>
            <person name="Frishman D."/>
            <person name="Stocker S."/>
            <person name="Lupas A.N."/>
            <person name="Baumeister W."/>
        </authorList>
    </citation>
    <scope>NUCLEOTIDE SEQUENCE [LARGE SCALE GENOMIC DNA]</scope>
    <source>
        <strain>ATCC 25905 / DSM 1728 / JCM 9062 / NBRC 15155 / AMRC-C165</strain>
    </source>
</reference>
<protein>
    <recommendedName>
        <fullName evidence="1">DNA-directed RNA polymerase subunit Rpo1N</fullName>
        <ecNumber evidence="1">2.7.7.6</ecNumber>
    </recommendedName>
    <alternativeName>
        <fullName evidence="1">DNA-directed RNA polymerase subunit A'</fullName>
    </alternativeName>
</protein>
<organism>
    <name type="scientific">Thermoplasma acidophilum (strain ATCC 25905 / DSM 1728 / JCM 9062 / NBRC 15155 / AMRC-C165)</name>
    <dbReference type="NCBI Taxonomy" id="273075"/>
    <lineage>
        <taxon>Archaea</taxon>
        <taxon>Methanobacteriati</taxon>
        <taxon>Thermoplasmatota</taxon>
        <taxon>Thermoplasmata</taxon>
        <taxon>Thermoplasmatales</taxon>
        <taxon>Thermoplasmataceae</taxon>
        <taxon>Thermoplasma</taxon>
    </lineage>
</organism>
<accession>Q03585</accession>
<dbReference type="EC" id="2.7.7.6" evidence="1"/>
<dbReference type="EMBL" id="X68198">
    <property type="protein sequence ID" value="CAA48281.1"/>
    <property type="molecule type" value="Genomic_DNA"/>
</dbReference>
<dbReference type="EMBL" id="AL445064">
    <property type="protein sequence ID" value="CAC11535.1"/>
    <property type="molecule type" value="Genomic_DNA"/>
</dbReference>
<dbReference type="PIR" id="S26723">
    <property type="entry name" value="S26723"/>
</dbReference>
<dbReference type="RefSeq" id="WP_010900820.1">
    <property type="nucleotide sequence ID" value="NC_002578.1"/>
</dbReference>
<dbReference type="SMR" id="Q03585"/>
<dbReference type="FunCoup" id="Q03585">
    <property type="interactions" value="154"/>
</dbReference>
<dbReference type="STRING" id="273075.gene:9571611"/>
<dbReference type="PaxDb" id="273075-Ta0391"/>
<dbReference type="EnsemblBacteria" id="CAC11535">
    <property type="protein sequence ID" value="CAC11535"/>
    <property type="gene ID" value="CAC11535"/>
</dbReference>
<dbReference type="KEGG" id="tac:Ta0391"/>
<dbReference type="eggNOG" id="arCOG04257">
    <property type="taxonomic scope" value="Archaea"/>
</dbReference>
<dbReference type="HOGENOM" id="CLU_000487_3_1_2"/>
<dbReference type="InParanoid" id="Q03585"/>
<dbReference type="OrthoDB" id="371812at2157"/>
<dbReference type="Proteomes" id="UP000001024">
    <property type="component" value="Chromosome"/>
</dbReference>
<dbReference type="GO" id="GO:0005737">
    <property type="term" value="C:cytoplasm"/>
    <property type="evidence" value="ECO:0007669"/>
    <property type="project" value="UniProtKB-SubCell"/>
</dbReference>
<dbReference type="GO" id="GO:0000428">
    <property type="term" value="C:DNA-directed RNA polymerase complex"/>
    <property type="evidence" value="ECO:0007669"/>
    <property type="project" value="UniProtKB-KW"/>
</dbReference>
<dbReference type="GO" id="GO:0003677">
    <property type="term" value="F:DNA binding"/>
    <property type="evidence" value="ECO:0007669"/>
    <property type="project" value="UniProtKB-UniRule"/>
</dbReference>
<dbReference type="GO" id="GO:0003899">
    <property type="term" value="F:DNA-directed RNA polymerase activity"/>
    <property type="evidence" value="ECO:0007669"/>
    <property type="project" value="UniProtKB-UniRule"/>
</dbReference>
<dbReference type="GO" id="GO:0000287">
    <property type="term" value="F:magnesium ion binding"/>
    <property type="evidence" value="ECO:0007669"/>
    <property type="project" value="UniProtKB-UniRule"/>
</dbReference>
<dbReference type="GO" id="GO:0008270">
    <property type="term" value="F:zinc ion binding"/>
    <property type="evidence" value="ECO:0007669"/>
    <property type="project" value="UniProtKB-UniRule"/>
</dbReference>
<dbReference type="GO" id="GO:0006351">
    <property type="term" value="P:DNA-templated transcription"/>
    <property type="evidence" value="ECO:0007669"/>
    <property type="project" value="UniProtKB-UniRule"/>
</dbReference>
<dbReference type="CDD" id="cd02582">
    <property type="entry name" value="RNAP_archeal_A"/>
    <property type="match status" value="1"/>
</dbReference>
<dbReference type="FunFam" id="2.40.40.20:FF:000019">
    <property type="entry name" value="DNA-directed RNA polymerase II subunit RPB1"/>
    <property type="match status" value="1"/>
</dbReference>
<dbReference type="Gene3D" id="1.10.132.30">
    <property type="match status" value="1"/>
</dbReference>
<dbReference type="Gene3D" id="2.40.40.20">
    <property type="match status" value="1"/>
</dbReference>
<dbReference type="Gene3D" id="6.10.250.2940">
    <property type="match status" value="1"/>
</dbReference>
<dbReference type="Gene3D" id="6.20.50.80">
    <property type="match status" value="1"/>
</dbReference>
<dbReference type="Gene3D" id="3.30.1490.180">
    <property type="entry name" value="RNA polymerase ii"/>
    <property type="match status" value="1"/>
</dbReference>
<dbReference type="Gene3D" id="4.10.860.120">
    <property type="entry name" value="RNA polymerase II, clamp domain"/>
    <property type="match status" value="2"/>
</dbReference>
<dbReference type="Gene3D" id="1.10.274.100">
    <property type="entry name" value="RNA polymerase Rpb1, domain 3"/>
    <property type="match status" value="1"/>
</dbReference>
<dbReference type="HAMAP" id="MF_00863">
    <property type="entry name" value="RNApol_arch_Rpo1N"/>
    <property type="match status" value="1"/>
</dbReference>
<dbReference type="InterPro" id="IPR045867">
    <property type="entry name" value="DNA-dir_RpoC_beta_prime"/>
</dbReference>
<dbReference type="InterPro" id="IPR000722">
    <property type="entry name" value="RNA_pol_asu"/>
</dbReference>
<dbReference type="InterPro" id="IPR006592">
    <property type="entry name" value="RNA_pol_N"/>
</dbReference>
<dbReference type="InterPro" id="IPR007080">
    <property type="entry name" value="RNA_pol_Rpb1_1"/>
</dbReference>
<dbReference type="InterPro" id="IPR007066">
    <property type="entry name" value="RNA_pol_Rpb1_3"/>
</dbReference>
<dbReference type="InterPro" id="IPR042102">
    <property type="entry name" value="RNA_pol_Rpb1_3_sf"/>
</dbReference>
<dbReference type="InterPro" id="IPR007083">
    <property type="entry name" value="RNA_pol_Rpb1_4"/>
</dbReference>
<dbReference type="InterPro" id="IPR007081">
    <property type="entry name" value="RNA_pol_Rpb1_5"/>
</dbReference>
<dbReference type="InterPro" id="IPR044893">
    <property type="entry name" value="RNA_pol_Rpb1_clamp_domain"/>
</dbReference>
<dbReference type="InterPro" id="IPR038120">
    <property type="entry name" value="Rpb1_funnel_sf"/>
</dbReference>
<dbReference type="InterPro" id="IPR012758">
    <property type="entry name" value="RPO1N"/>
</dbReference>
<dbReference type="NCBIfam" id="NF006336">
    <property type="entry name" value="PRK08566.1"/>
    <property type="match status" value="1"/>
</dbReference>
<dbReference type="NCBIfam" id="TIGR02390">
    <property type="entry name" value="RNA_pol_rpoA1"/>
    <property type="match status" value="1"/>
</dbReference>
<dbReference type="PANTHER" id="PTHR19376">
    <property type="entry name" value="DNA-DIRECTED RNA POLYMERASE"/>
    <property type="match status" value="1"/>
</dbReference>
<dbReference type="PANTHER" id="PTHR19376:SF32">
    <property type="entry name" value="DNA-DIRECTED RNA POLYMERASE III SUBUNIT RPC1"/>
    <property type="match status" value="1"/>
</dbReference>
<dbReference type="Pfam" id="PF04997">
    <property type="entry name" value="RNA_pol_Rpb1_1"/>
    <property type="match status" value="1"/>
</dbReference>
<dbReference type="Pfam" id="PF00623">
    <property type="entry name" value="RNA_pol_Rpb1_2"/>
    <property type="match status" value="1"/>
</dbReference>
<dbReference type="Pfam" id="PF04983">
    <property type="entry name" value="RNA_pol_Rpb1_3"/>
    <property type="match status" value="1"/>
</dbReference>
<dbReference type="Pfam" id="PF05000">
    <property type="entry name" value="RNA_pol_Rpb1_4"/>
    <property type="match status" value="1"/>
</dbReference>
<dbReference type="Pfam" id="PF04998">
    <property type="entry name" value="RNA_pol_Rpb1_5"/>
    <property type="match status" value="1"/>
</dbReference>
<dbReference type="SMART" id="SM00663">
    <property type="entry name" value="RPOLA_N"/>
    <property type="match status" value="1"/>
</dbReference>
<dbReference type="SUPFAM" id="SSF64484">
    <property type="entry name" value="beta and beta-prime subunits of DNA dependent RNA-polymerase"/>
    <property type="match status" value="1"/>
</dbReference>
<proteinExistence type="inferred from homology"/>
<gene>
    <name evidence="1" type="primary">rpo1N</name>
    <name evidence="1" type="synonym">rpoA1</name>
    <name type="ordered locus">Ta0391</name>
</gene>
<name>RPO1N_THEAC</name>